<dbReference type="EC" id="7.5.2.6" evidence="1"/>
<dbReference type="EMBL" id="AE016853">
    <property type="protein sequence ID" value="AAO58412.1"/>
    <property type="status" value="ALT_INIT"/>
    <property type="molecule type" value="Genomic_DNA"/>
</dbReference>
<dbReference type="RefSeq" id="NP_794717.1">
    <property type="nucleotide sequence ID" value="NC_004578.1"/>
</dbReference>
<dbReference type="RefSeq" id="WP_010213170.1">
    <property type="nucleotide sequence ID" value="NC_004578.1"/>
</dbReference>
<dbReference type="SMR" id="Q87VF3"/>
<dbReference type="STRING" id="223283.PSPTO_4984"/>
<dbReference type="GeneID" id="1186669"/>
<dbReference type="KEGG" id="pst:PSPTO_4984"/>
<dbReference type="PATRIC" id="fig|223283.9.peg.5099"/>
<dbReference type="eggNOG" id="COG1132">
    <property type="taxonomic scope" value="Bacteria"/>
</dbReference>
<dbReference type="HOGENOM" id="CLU_000604_84_3_6"/>
<dbReference type="OrthoDB" id="9806127at2"/>
<dbReference type="Proteomes" id="UP000002515">
    <property type="component" value="Chromosome"/>
</dbReference>
<dbReference type="GO" id="GO:0005886">
    <property type="term" value="C:plasma membrane"/>
    <property type="evidence" value="ECO:0007669"/>
    <property type="project" value="UniProtKB-SubCell"/>
</dbReference>
<dbReference type="GO" id="GO:0015421">
    <property type="term" value="F:ABC-type oligopeptide transporter activity"/>
    <property type="evidence" value="ECO:0007669"/>
    <property type="project" value="TreeGrafter"/>
</dbReference>
<dbReference type="GO" id="GO:0005524">
    <property type="term" value="F:ATP binding"/>
    <property type="evidence" value="ECO:0007669"/>
    <property type="project" value="UniProtKB-KW"/>
</dbReference>
<dbReference type="GO" id="GO:0016887">
    <property type="term" value="F:ATP hydrolysis activity"/>
    <property type="evidence" value="ECO:0007669"/>
    <property type="project" value="InterPro"/>
</dbReference>
<dbReference type="GO" id="GO:0034040">
    <property type="term" value="F:ATPase-coupled lipid transmembrane transporter activity"/>
    <property type="evidence" value="ECO:0007669"/>
    <property type="project" value="InterPro"/>
</dbReference>
<dbReference type="CDD" id="cd18552">
    <property type="entry name" value="ABC_6TM_MsbA_like"/>
    <property type="match status" value="1"/>
</dbReference>
<dbReference type="FunFam" id="3.40.50.300:FF:000140">
    <property type="entry name" value="Lipid A export ATP-binding/permease protein MsbA"/>
    <property type="match status" value="1"/>
</dbReference>
<dbReference type="Gene3D" id="1.20.1560.10">
    <property type="entry name" value="ABC transporter type 1, transmembrane domain"/>
    <property type="match status" value="1"/>
</dbReference>
<dbReference type="Gene3D" id="3.40.50.300">
    <property type="entry name" value="P-loop containing nucleotide triphosphate hydrolases"/>
    <property type="match status" value="1"/>
</dbReference>
<dbReference type="InterPro" id="IPR003593">
    <property type="entry name" value="AAA+_ATPase"/>
</dbReference>
<dbReference type="InterPro" id="IPR011527">
    <property type="entry name" value="ABC1_TM_dom"/>
</dbReference>
<dbReference type="InterPro" id="IPR036640">
    <property type="entry name" value="ABC1_TM_sf"/>
</dbReference>
<dbReference type="InterPro" id="IPR003439">
    <property type="entry name" value="ABC_transporter-like_ATP-bd"/>
</dbReference>
<dbReference type="InterPro" id="IPR017871">
    <property type="entry name" value="ABC_transporter-like_CS"/>
</dbReference>
<dbReference type="InterPro" id="IPR011917">
    <property type="entry name" value="ABC_transpr_lipidA"/>
</dbReference>
<dbReference type="InterPro" id="IPR027417">
    <property type="entry name" value="P-loop_NTPase"/>
</dbReference>
<dbReference type="InterPro" id="IPR039421">
    <property type="entry name" value="Type_1_exporter"/>
</dbReference>
<dbReference type="NCBIfam" id="TIGR02203">
    <property type="entry name" value="MsbA_lipidA"/>
    <property type="match status" value="1"/>
</dbReference>
<dbReference type="PANTHER" id="PTHR43394:SF1">
    <property type="entry name" value="ATP-BINDING CASSETTE SUB-FAMILY B MEMBER 10, MITOCHONDRIAL"/>
    <property type="match status" value="1"/>
</dbReference>
<dbReference type="PANTHER" id="PTHR43394">
    <property type="entry name" value="ATP-DEPENDENT PERMEASE MDL1, MITOCHONDRIAL"/>
    <property type="match status" value="1"/>
</dbReference>
<dbReference type="Pfam" id="PF00664">
    <property type="entry name" value="ABC_membrane"/>
    <property type="match status" value="1"/>
</dbReference>
<dbReference type="Pfam" id="PF00005">
    <property type="entry name" value="ABC_tran"/>
    <property type="match status" value="1"/>
</dbReference>
<dbReference type="SMART" id="SM00382">
    <property type="entry name" value="AAA"/>
    <property type="match status" value="1"/>
</dbReference>
<dbReference type="SUPFAM" id="SSF90123">
    <property type="entry name" value="ABC transporter transmembrane region"/>
    <property type="match status" value="1"/>
</dbReference>
<dbReference type="SUPFAM" id="SSF52540">
    <property type="entry name" value="P-loop containing nucleoside triphosphate hydrolases"/>
    <property type="match status" value="1"/>
</dbReference>
<dbReference type="PROSITE" id="PS50929">
    <property type="entry name" value="ABC_TM1F"/>
    <property type="match status" value="1"/>
</dbReference>
<dbReference type="PROSITE" id="PS00211">
    <property type="entry name" value="ABC_TRANSPORTER_1"/>
    <property type="match status" value="1"/>
</dbReference>
<dbReference type="PROSITE" id="PS50893">
    <property type="entry name" value="ABC_TRANSPORTER_2"/>
    <property type="match status" value="1"/>
</dbReference>
<dbReference type="PROSITE" id="PS51239">
    <property type="entry name" value="MSBA"/>
    <property type="match status" value="1"/>
</dbReference>
<reference key="1">
    <citation type="journal article" date="2003" name="Proc. Natl. Acad. Sci. U.S.A.">
        <title>The complete genome sequence of the Arabidopsis and tomato pathogen Pseudomonas syringae pv. tomato DC3000.</title>
        <authorList>
            <person name="Buell C.R."/>
            <person name="Joardar V."/>
            <person name="Lindeberg M."/>
            <person name="Selengut J."/>
            <person name="Paulsen I.T."/>
            <person name="Gwinn M.L."/>
            <person name="Dodson R.J."/>
            <person name="DeBoy R.T."/>
            <person name="Durkin A.S."/>
            <person name="Kolonay J.F."/>
            <person name="Madupu R."/>
            <person name="Daugherty S.C."/>
            <person name="Brinkac L.M."/>
            <person name="Beanan M.J."/>
            <person name="Haft D.H."/>
            <person name="Nelson W.C."/>
            <person name="Davidsen T.M."/>
            <person name="Zafar N."/>
            <person name="Zhou L."/>
            <person name="Liu J."/>
            <person name="Yuan Q."/>
            <person name="Khouri H.M."/>
            <person name="Fedorova N.B."/>
            <person name="Tran B."/>
            <person name="Russell D."/>
            <person name="Berry K.J."/>
            <person name="Utterback T.R."/>
            <person name="Van Aken S.E."/>
            <person name="Feldblyum T.V."/>
            <person name="D'Ascenzo M."/>
            <person name="Deng W.-L."/>
            <person name="Ramos A.R."/>
            <person name="Alfano J.R."/>
            <person name="Cartinhour S."/>
            <person name="Chatterjee A.K."/>
            <person name="Delaney T.P."/>
            <person name="Lazarowitz S.G."/>
            <person name="Martin G.B."/>
            <person name="Schneider D.J."/>
            <person name="Tang X."/>
            <person name="Bender C.L."/>
            <person name="White O."/>
            <person name="Fraser C.M."/>
            <person name="Collmer A."/>
        </authorList>
    </citation>
    <scope>NUCLEOTIDE SEQUENCE [LARGE SCALE GENOMIC DNA]</scope>
    <source>
        <strain>ATCC BAA-871 / DC3000</strain>
    </source>
</reference>
<comment type="function">
    <text evidence="1">Involved in lipopolysaccharide (LPS) biosynthesis. Translocates lipid A-core from the inner to the outer leaflet of the inner membrane. Transmembrane domains (TMD) form a pore in the inner membrane and the ATP-binding domain (NBD) is responsible for energy generation.</text>
</comment>
<comment type="catalytic activity">
    <reaction evidence="1">
        <text>ATP + H2O + lipid A-core oligosaccharideSide 1 = ADP + phosphate + lipid A-core oligosaccharideSide 2.</text>
        <dbReference type="EC" id="7.5.2.6"/>
    </reaction>
</comment>
<comment type="subunit">
    <text evidence="1">Homodimer.</text>
</comment>
<comment type="subcellular location">
    <subcellularLocation>
        <location evidence="1">Cell inner membrane</location>
        <topology evidence="1">Multi-pass membrane protein</topology>
    </subcellularLocation>
</comment>
<comment type="domain">
    <text evidence="1">In MsbA the ATP-binding domain (NBD) and the transmembrane domain (TMD) are fused.</text>
</comment>
<comment type="similarity">
    <text evidence="1">Belongs to the ABC transporter superfamily. Lipid exporter (TC 3.A.1.106) family.</text>
</comment>
<comment type="sequence caution" evidence="2">
    <conflict type="erroneous initiation">
        <sequence resource="EMBL-CDS" id="AAO58412"/>
    </conflict>
</comment>
<proteinExistence type="inferred from homology"/>
<protein>
    <recommendedName>
        <fullName evidence="1">ATP-dependent lipid A-core flippase</fullName>
        <ecNumber evidence="1">7.5.2.6</ecNumber>
    </recommendedName>
    <alternativeName>
        <fullName evidence="1">Lipid A export ATP-binding/permease protein MsbA</fullName>
    </alternativeName>
</protein>
<feature type="chain" id="PRO_0000092595" description="ATP-dependent lipid A-core flippase">
    <location>
        <begin position="1"/>
        <end position="600"/>
    </location>
</feature>
<feature type="transmembrane region" description="Helical" evidence="1">
    <location>
        <begin position="26"/>
        <end position="46"/>
    </location>
</feature>
<feature type="transmembrane region" description="Helical" evidence="1">
    <location>
        <begin position="82"/>
        <end position="102"/>
    </location>
</feature>
<feature type="transmembrane region" description="Helical" evidence="1">
    <location>
        <begin position="167"/>
        <end position="187"/>
    </location>
</feature>
<feature type="transmembrane region" description="Helical" evidence="1">
    <location>
        <begin position="266"/>
        <end position="286"/>
    </location>
</feature>
<feature type="domain" description="ABC transmembrane type-1" evidence="1">
    <location>
        <begin position="30"/>
        <end position="321"/>
    </location>
</feature>
<feature type="domain" description="ABC transporter" evidence="1">
    <location>
        <begin position="353"/>
        <end position="589"/>
    </location>
</feature>
<feature type="binding site" evidence="1">
    <location>
        <begin position="387"/>
        <end position="394"/>
    </location>
    <ligand>
        <name>ATP</name>
        <dbReference type="ChEBI" id="CHEBI:30616"/>
    </ligand>
</feature>
<keyword id="KW-0067">ATP-binding</keyword>
<keyword id="KW-0997">Cell inner membrane</keyword>
<keyword id="KW-1003">Cell membrane</keyword>
<keyword id="KW-0445">Lipid transport</keyword>
<keyword id="KW-0472">Membrane</keyword>
<keyword id="KW-0547">Nucleotide-binding</keyword>
<keyword id="KW-1185">Reference proteome</keyword>
<keyword id="KW-1278">Translocase</keyword>
<keyword id="KW-0812">Transmembrane</keyword>
<keyword id="KW-1133">Transmembrane helix</keyword>
<keyword id="KW-0813">Transport</keyword>
<organism>
    <name type="scientific">Pseudomonas syringae pv. tomato (strain ATCC BAA-871 / DC3000)</name>
    <dbReference type="NCBI Taxonomy" id="223283"/>
    <lineage>
        <taxon>Bacteria</taxon>
        <taxon>Pseudomonadati</taxon>
        <taxon>Pseudomonadota</taxon>
        <taxon>Gammaproteobacteria</taxon>
        <taxon>Pseudomonadales</taxon>
        <taxon>Pseudomonadaceae</taxon>
        <taxon>Pseudomonas</taxon>
    </lineage>
</organism>
<accession>Q87VF3</accession>
<gene>
    <name evidence="1" type="primary">msbA</name>
    <name type="ordered locus">PSPTO_4984</name>
</gene>
<sequence>MTTPESSATSSVKIYFRLLSYVRPYVGIFLLSILGFVIFASTQPMLAGILKYFVDGLSNPEAVLFPNVPYLRELQLLQAVPLLIVLIAAWQGLGSFLGNYFLAKVSLGLVHDLRVELFNKLLVLPNRYFDTTNSGHLISRITFNVTMVTGAATDAIKVVIREGLTVVFLFIYLLMMNWKLTLVMLAILPLIAVMVSSASKKFRKQSKKIQVAMGDVTHVASETIQGYRVVRSFGGEAYEQNRFAEASDSNTRKQLRMTKTGAIYTPMLQLVIYSAMAVLMFLVLFLRGDATAGDLVAYITAAGLLPKPIRQLSEVSSTIQKGVAGAESIFEQLDVEEEVDTGTIELDRVSGHLEVKNLSFFYPQTERQVLNDISFSAAPGQMIALVGRSGSGKSTLANLIPRFYGHEMGNILLDGVEINDYRLRNLRKHIAQVNQNVTLFNDSIANNIAYGDLAGAPRADIEAAAADAYAKEFIDQLPQGFDTQVGENGVLLSGGQRQRLAIARALLKNAPLLILDEATSALDTESERHIQAALDHVMKGRTTLVIAHRLSTIEKADMILVMDAGKIVERGTHTELLAQNGYYARLHAMGLDEPAPAGAV</sequence>
<evidence type="ECO:0000255" key="1">
    <source>
        <dbReference type="HAMAP-Rule" id="MF_01703"/>
    </source>
</evidence>
<evidence type="ECO:0000305" key="2"/>
<name>MSBA_PSESM</name>